<accession>O66075</accession>
<name>RL31_TREPA</name>
<evidence type="ECO:0000255" key="1">
    <source>
        <dbReference type="HAMAP-Rule" id="MF_00501"/>
    </source>
</evidence>
<evidence type="ECO:0000305" key="2"/>
<feature type="chain" id="PRO_0000173174" description="Large ribosomal subunit protein bL31">
    <location>
        <begin position="1"/>
        <end position="67"/>
    </location>
</feature>
<feature type="binding site" evidence="1">
    <location>
        <position position="16"/>
    </location>
    <ligand>
        <name>Zn(2+)</name>
        <dbReference type="ChEBI" id="CHEBI:29105"/>
    </ligand>
</feature>
<feature type="binding site" evidence="1">
    <location>
        <position position="18"/>
    </location>
    <ligand>
        <name>Zn(2+)</name>
        <dbReference type="ChEBI" id="CHEBI:29105"/>
    </ligand>
</feature>
<feature type="binding site" evidence="1">
    <location>
        <position position="36"/>
    </location>
    <ligand>
        <name>Zn(2+)</name>
        <dbReference type="ChEBI" id="CHEBI:29105"/>
    </ligand>
</feature>
<feature type="binding site" evidence="1">
    <location>
        <position position="39"/>
    </location>
    <ligand>
        <name>Zn(2+)</name>
        <dbReference type="ChEBI" id="CHEBI:29105"/>
    </ligand>
</feature>
<organism>
    <name type="scientific">Treponema pallidum (strain Nichols)</name>
    <dbReference type="NCBI Taxonomy" id="243276"/>
    <lineage>
        <taxon>Bacteria</taxon>
        <taxon>Pseudomonadati</taxon>
        <taxon>Spirochaetota</taxon>
        <taxon>Spirochaetia</taxon>
        <taxon>Spirochaetales</taxon>
        <taxon>Treponemataceae</taxon>
        <taxon>Treponema</taxon>
    </lineage>
</organism>
<dbReference type="EMBL" id="U95744">
    <property type="protein sequence ID" value="AAC08321.1"/>
    <property type="molecule type" value="Genomic_DNA"/>
</dbReference>
<dbReference type="EMBL" id="AE000520">
    <property type="protein sequence ID" value="AAC65244.1"/>
    <property type="molecule type" value="Genomic_DNA"/>
</dbReference>
<dbReference type="PIR" id="D71346">
    <property type="entry name" value="D71346"/>
</dbReference>
<dbReference type="RefSeq" id="WP_010881704.1">
    <property type="nucleotide sequence ID" value="NC_021490.2"/>
</dbReference>
<dbReference type="SMR" id="O66075"/>
<dbReference type="IntAct" id="O66075">
    <property type="interactions" value="13"/>
</dbReference>
<dbReference type="STRING" id="243276.TP_0255"/>
<dbReference type="EnsemblBacteria" id="AAC65244">
    <property type="protein sequence ID" value="AAC65244"/>
    <property type="gene ID" value="TP_0255"/>
</dbReference>
<dbReference type="GeneID" id="93876046"/>
<dbReference type="KEGG" id="tpa:TP_0255"/>
<dbReference type="KEGG" id="tpw:TPANIC_0255"/>
<dbReference type="eggNOG" id="COG0254">
    <property type="taxonomic scope" value="Bacteria"/>
</dbReference>
<dbReference type="HOGENOM" id="CLU_114306_4_3_12"/>
<dbReference type="OrthoDB" id="9803251at2"/>
<dbReference type="Proteomes" id="UP000000811">
    <property type="component" value="Chromosome"/>
</dbReference>
<dbReference type="GO" id="GO:1990904">
    <property type="term" value="C:ribonucleoprotein complex"/>
    <property type="evidence" value="ECO:0007669"/>
    <property type="project" value="UniProtKB-KW"/>
</dbReference>
<dbReference type="GO" id="GO:0005840">
    <property type="term" value="C:ribosome"/>
    <property type="evidence" value="ECO:0007669"/>
    <property type="project" value="UniProtKB-KW"/>
</dbReference>
<dbReference type="GO" id="GO:0046872">
    <property type="term" value="F:metal ion binding"/>
    <property type="evidence" value="ECO:0007669"/>
    <property type="project" value="UniProtKB-KW"/>
</dbReference>
<dbReference type="GO" id="GO:0019843">
    <property type="term" value="F:rRNA binding"/>
    <property type="evidence" value="ECO:0007669"/>
    <property type="project" value="UniProtKB-KW"/>
</dbReference>
<dbReference type="GO" id="GO:0003735">
    <property type="term" value="F:structural constituent of ribosome"/>
    <property type="evidence" value="ECO:0007669"/>
    <property type="project" value="InterPro"/>
</dbReference>
<dbReference type="GO" id="GO:0006412">
    <property type="term" value="P:translation"/>
    <property type="evidence" value="ECO:0007669"/>
    <property type="project" value="UniProtKB-UniRule"/>
</dbReference>
<dbReference type="Gene3D" id="4.10.830.30">
    <property type="entry name" value="Ribosomal protein L31"/>
    <property type="match status" value="1"/>
</dbReference>
<dbReference type="HAMAP" id="MF_00501">
    <property type="entry name" value="Ribosomal_bL31_1"/>
    <property type="match status" value="1"/>
</dbReference>
<dbReference type="InterPro" id="IPR034704">
    <property type="entry name" value="Ribosomal_bL28/bL31-like_sf"/>
</dbReference>
<dbReference type="InterPro" id="IPR002150">
    <property type="entry name" value="Ribosomal_bL31"/>
</dbReference>
<dbReference type="InterPro" id="IPR027491">
    <property type="entry name" value="Ribosomal_bL31_A"/>
</dbReference>
<dbReference type="InterPro" id="IPR042105">
    <property type="entry name" value="Ribosomal_bL31_sf"/>
</dbReference>
<dbReference type="NCBIfam" id="TIGR00105">
    <property type="entry name" value="L31"/>
    <property type="match status" value="1"/>
</dbReference>
<dbReference type="NCBIfam" id="NF000612">
    <property type="entry name" value="PRK00019.1"/>
    <property type="match status" value="1"/>
</dbReference>
<dbReference type="PANTHER" id="PTHR33280">
    <property type="entry name" value="50S RIBOSOMAL PROTEIN L31, CHLOROPLASTIC"/>
    <property type="match status" value="1"/>
</dbReference>
<dbReference type="PANTHER" id="PTHR33280:SF1">
    <property type="entry name" value="LARGE RIBOSOMAL SUBUNIT PROTEIN BL31C"/>
    <property type="match status" value="1"/>
</dbReference>
<dbReference type="Pfam" id="PF01197">
    <property type="entry name" value="Ribosomal_L31"/>
    <property type="match status" value="1"/>
</dbReference>
<dbReference type="PRINTS" id="PR01249">
    <property type="entry name" value="RIBOSOMALL31"/>
</dbReference>
<dbReference type="SUPFAM" id="SSF143800">
    <property type="entry name" value="L28p-like"/>
    <property type="match status" value="1"/>
</dbReference>
<dbReference type="PROSITE" id="PS01143">
    <property type="entry name" value="RIBOSOMAL_L31"/>
    <property type="match status" value="1"/>
</dbReference>
<gene>
    <name evidence="1" type="primary">rpmE</name>
    <name type="ordered locus">TP_0255</name>
</gene>
<reference key="1">
    <citation type="submission" date="1997-03" db="EMBL/GenBank/DDBJ databases">
        <authorList>
            <person name="Shevchenko D.V."/>
            <person name="Akins D.R."/>
            <person name="Robinson E.J."/>
            <person name="Shevchenko O.V."/>
            <person name="Radolf J.D."/>
        </authorList>
    </citation>
    <scope>NUCLEOTIDE SEQUENCE [GENOMIC DNA]</scope>
</reference>
<reference key="2">
    <citation type="journal article" date="1998" name="Science">
        <title>Complete genome sequence of Treponema pallidum, the syphilis spirochete.</title>
        <authorList>
            <person name="Fraser C.M."/>
            <person name="Norris S.J."/>
            <person name="Weinstock G.M."/>
            <person name="White O."/>
            <person name="Sutton G.G."/>
            <person name="Dodson R.J."/>
            <person name="Gwinn M.L."/>
            <person name="Hickey E.K."/>
            <person name="Clayton R.A."/>
            <person name="Ketchum K.A."/>
            <person name="Sodergren E."/>
            <person name="Hardham J.M."/>
            <person name="McLeod M.P."/>
            <person name="Salzberg S.L."/>
            <person name="Peterson J.D."/>
            <person name="Khalak H.G."/>
            <person name="Richardson D.L."/>
            <person name="Howell J.K."/>
            <person name="Chidambaram M."/>
            <person name="Utterback T.R."/>
            <person name="McDonald L.A."/>
            <person name="Artiach P."/>
            <person name="Bowman C."/>
            <person name="Cotton M.D."/>
            <person name="Fujii C."/>
            <person name="Garland S.A."/>
            <person name="Hatch B."/>
            <person name="Horst K."/>
            <person name="Roberts K.M."/>
            <person name="Sandusky M."/>
            <person name="Weidman J.F."/>
            <person name="Smith H.O."/>
            <person name="Venter J.C."/>
        </authorList>
    </citation>
    <scope>NUCLEOTIDE SEQUENCE [LARGE SCALE GENOMIC DNA]</scope>
    <source>
        <strain>Nichols</strain>
    </source>
</reference>
<protein>
    <recommendedName>
        <fullName evidence="1">Large ribosomal subunit protein bL31</fullName>
    </recommendedName>
    <alternativeName>
        <fullName evidence="2">50S ribosomal protein L31</fullName>
    </alternativeName>
</protein>
<keyword id="KW-0479">Metal-binding</keyword>
<keyword id="KW-1185">Reference proteome</keyword>
<keyword id="KW-0687">Ribonucleoprotein</keyword>
<keyword id="KW-0689">Ribosomal protein</keyword>
<keyword id="KW-0694">RNA-binding</keyword>
<keyword id="KW-0699">rRNA-binding</keyword>
<keyword id="KW-0862">Zinc</keyword>
<proteinExistence type="inferred from homology"/>
<sequence length="67" mass="7599">MKKGLHPRYEETKVVCACGNVIVTASTVKDLRVEICSACHPFFTGKQKLVDSAGRIDRFNRRYKIRG</sequence>
<comment type="function">
    <text evidence="1">Binds the 23S rRNA.</text>
</comment>
<comment type="cofactor">
    <cofactor evidence="1">
        <name>Zn(2+)</name>
        <dbReference type="ChEBI" id="CHEBI:29105"/>
    </cofactor>
    <text evidence="1">Binds 1 zinc ion per subunit.</text>
</comment>
<comment type="subunit">
    <text evidence="1">Part of the 50S ribosomal subunit.</text>
</comment>
<comment type="similarity">
    <text evidence="1">Belongs to the bacterial ribosomal protein bL31 family. Type A subfamily.</text>
</comment>